<dbReference type="EC" id="2.5.1.34"/>
<dbReference type="EMBL" id="AY259838">
    <property type="protein sequence ID" value="AAP81207.1"/>
    <property type="molecule type" value="Genomic_DNA"/>
</dbReference>
<dbReference type="SMR" id="Q6X2E2"/>
<dbReference type="UniPathway" id="UPA00327"/>
<dbReference type="GO" id="GO:0050364">
    <property type="term" value="F:tryptophan dimethylallyltransferase activity"/>
    <property type="evidence" value="ECO:0007669"/>
    <property type="project" value="UniProtKB-EC"/>
</dbReference>
<dbReference type="GO" id="GO:0035837">
    <property type="term" value="P:ergot alkaloid biosynthetic process"/>
    <property type="evidence" value="ECO:0007669"/>
    <property type="project" value="InterPro"/>
</dbReference>
<dbReference type="CDD" id="cd13929">
    <property type="entry name" value="PT-DMATS_CymD"/>
    <property type="match status" value="1"/>
</dbReference>
<dbReference type="InterPro" id="IPR033964">
    <property type="entry name" value="Aro_prenylTrfase"/>
</dbReference>
<dbReference type="InterPro" id="IPR017795">
    <property type="entry name" value="Aro_prenylTrfase_DMATS"/>
</dbReference>
<dbReference type="InterPro" id="IPR012148">
    <property type="entry name" value="DMATS-type_fun"/>
</dbReference>
<dbReference type="InterPro" id="IPR017796">
    <property type="entry name" value="Trp_dimethylallylTrfase"/>
</dbReference>
<dbReference type="NCBIfam" id="TIGR03429">
    <property type="entry name" value="arom_pren_DMATS"/>
    <property type="match status" value="1"/>
</dbReference>
<dbReference type="NCBIfam" id="TIGR03430">
    <property type="entry name" value="trp_dimet_allyl"/>
    <property type="match status" value="1"/>
</dbReference>
<dbReference type="PANTHER" id="PTHR40627">
    <property type="entry name" value="INDOLE PRENYLTRANSFERASE TDIB-RELATED"/>
    <property type="match status" value="1"/>
</dbReference>
<dbReference type="PANTHER" id="PTHR40627:SF3">
    <property type="entry name" value="PRENYLTRANSFERASE ASQH2-RELATED"/>
    <property type="match status" value="1"/>
</dbReference>
<dbReference type="Pfam" id="PF11991">
    <property type="entry name" value="Trp_DMAT"/>
    <property type="match status" value="1"/>
</dbReference>
<dbReference type="PIRSF" id="PIRSF000509">
    <property type="entry name" value="Trp_DMAT"/>
    <property type="match status" value="1"/>
</dbReference>
<dbReference type="SFLD" id="SFLDS00036">
    <property type="entry name" value="Aromatic_Prenyltransferase"/>
    <property type="match status" value="1"/>
</dbReference>
<dbReference type="SFLD" id="SFLDG01162">
    <property type="entry name" value="I"/>
    <property type="match status" value="1"/>
</dbReference>
<sequence>MVMAKTLHQEVYHTLSETFDFANNDQRLWWHSTAPMFEKMLQTANYSIDAQYRHLGIYKSHVIPFLGVYPTRSGERWLSILTRYGTPFELSLNCSDSVVRYTYEPINAATGSHLDPFNTFAIWEALKKHIESQPGIDLEWFSYFKQELTLDANESTYLHSQNLVKEQIKTQNKLALDLKGDKFVLKTYIYPELKSVATGKSVQELVFGSVRKLAQKHKSIRPAFEMLEDYVQSRNKFSTTDDSHNTLLSSRLLSCDLISPTKSRVKIYLLERMVSLPAMEDLWTLGGRREDQSTIEGLEMIRELWGLLNMSPGLRAYPEPYLPLGAIPNEQLPSMANYTLHHNDPIPEPQVYFTVFGMNDMEVTNALTTFFMRHEWSDMASKYKACLRESFPHHDYEALNYIHSYISFSYRKNKPYLSVYLHSFETGKWPVFPEGLIAFDACRRDLTC</sequence>
<proteinExistence type="inferred from homology"/>
<accession>Q6X2E2</accession>
<gene>
    <name type="primary">dmaW1</name>
</gene>
<feature type="chain" id="PRO_0000181360" description="Tryptophan dimethylallyltransferase 1">
    <location>
        <begin position="1"/>
        <end position="448"/>
    </location>
</feature>
<feature type="binding site" evidence="2">
    <location>
        <begin position="80"/>
        <end position="81"/>
    </location>
    <ligand>
        <name>L-tryptophan</name>
        <dbReference type="ChEBI" id="CHEBI:57912"/>
    </ligand>
</feature>
<feature type="binding site" evidence="2">
    <location>
        <position position="89"/>
    </location>
    <ligand>
        <name>L-tryptophan</name>
        <dbReference type="ChEBI" id="CHEBI:57912"/>
    </ligand>
</feature>
<feature type="binding site" evidence="2">
    <location>
        <position position="100"/>
    </location>
    <ligand>
        <name>substrate</name>
    </ligand>
</feature>
<feature type="binding site" evidence="2">
    <location>
        <position position="186"/>
    </location>
    <ligand>
        <name>substrate</name>
    </ligand>
</feature>
<feature type="binding site" evidence="2">
    <location>
        <position position="188"/>
    </location>
    <ligand>
        <name>substrate</name>
    </ligand>
</feature>
<feature type="binding site" evidence="2">
    <location>
        <position position="190"/>
    </location>
    <ligand>
        <name>L-tryptophan</name>
        <dbReference type="ChEBI" id="CHEBI:57912"/>
    </ligand>
</feature>
<feature type="binding site" evidence="2">
    <location>
        <position position="251"/>
    </location>
    <ligand>
        <name>L-tryptophan</name>
        <dbReference type="ChEBI" id="CHEBI:57912"/>
    </ligand>
</feature>
<feature type="binding site" evidence="2">
    <location>
        <position position="264"/>
    </location>
    <ligand>
        <name>substrate</name>
    </ligand>
</feature>
<feature type="binding site" evidence="2">
    <location>
        <position position="266"/>
    </location>
    <ligand>
        <name>substrate</name>
    </ligand>
</feature>
<feature type="binding site" evidence="2">
    <location>
        <position position="268"/>
    </location>
    <ligand>
        <name>substrate</name>
    </ligand>
</feature>
<feature type="binding site" evidence="2">
    <location>
        <position position="350"/>
    </location>
    <ligand>
        <name>substrate</name>
    </ligand>
</feature>
<feature type="binding site" evidence="2">
    <location>
        <position position="352"/>
    </location>
    <ligand>
        <name>substrate</name>
    </ligand>
</feature>
<feature type="binding site" evidence="2">
    <location>
        <position position="416"/>
    </location>
    <ligand>
        <name>substrate</name>
    </ligand>
</feature>
<feature type="binding site" evidence="2">
    <location>
        <position position="420"/>
    </location>
    <ligand>
        <name>substrate</name>
    </ligand>
</feature>
<evidence type="ECO:0000250" key="1"/>
<evidence type="ECO:0000250" key="2">
    <source>
        <dbReference type="UniProtKB" id="Q50EL0"/>
    </source>
</evidence>
<evidence type="ECO:0000305" key="3"/>
<comment type="function">
    <text evidence="1">Catalyzes the first step of ergot alkaloid biosynthesis. Ergot alkaloids, which are produced by endophyte fungi, can enhance plant host fitness, but also cause livestock toxicosis to host plants (By similarity).</text>
</comment>
<comment type="catalytic activity">
    <reaction>
        <text>L-tryptophan + dimethylallyl diphosphate = 4-(3-methylbut-2-enyl)-L-tryptophan + diphosphate</text>
        <dbReference type="Rhea" id="RHEA:14173"/>
        <dbReference type="ChEBI" id="CHEBI:33019"/>
        <dbReference type="ChEBI" id="CHEBI:57623"/>
        <dbReference type="ChEBI" id="CHEBI:57912"/>
        <dbReference type="ChEBI" id="CHEBI:58209"/>
        <dbReference type="EC" id="2.5.1.34"/>
    </reaction>
</comment>
<comment type="pathway">
    <text>Alkaloid biosynthesis; ergot alkaloid biosynthesis.</text>
</comment>
<comment type="subunit">
    <text evidence="1">Homodimer.</text>
</comment>
<comment type="similarity">
    <text evidence="3">Belongs to the tryptophan dimethylallyltransferase family.</text>
</comment>
<keyword id="KW-0017">Alkaloid metabolism</keyword>
<keyword id="KW-0808">Transferase</keyword>
<name>DMAW1_EPICN</name>
<protein>
    <recommendedName>
        <fullName>Tryptophan dimethylallyltransferase 1</fullName>
        <ecNumber>2.5.1.34</ecNumber>
    </recommendedName>
    <alternativeName>
        <fullName>4-dimethylallyltryptophan synthase 1</fullName>
    </alternativeName>
    <alternativeName>
        <fullName>All-trans-hexaprenyl-diphosphate synthase 1</fullName>
    </alternativeName>
    <alternativeName>
        <fullName>L-tryptophan dimethylallyl transferase 1</fullName>
        <shortName>DMATS 1</shortName>
    </alternativeName>
</protein>
<organism>
    <name type="scientific">Epichloe coenophiala</name>
    <name type="common">Tall fescue endophyte fungus</name>
    <name type="synonym">Neotyphodium coenophialum</name>
    <dbReference type="NCBI Taxonomy" id="5047"/>
    <lineage>
        <taxon>Eukaryota</taxon>
        <taxon>Fungi</taxon>
        <taxon>Dikarya</taxon>
        <taxon>Ascomycota</taxon>
        <taxon>Pezizomycotina</taxon>
        <taxon>Sordariomycetes</taxon>
        <taxon>Hypocreomycetidae</taxon>
        <taxon>Hypocreales</taxon>
        <taxon>Clavicipitaceae</taxon>
        <taxon>Epichloe</taxon>
    </lineage>
</organism>
<reference key="1">
    <citation type="journal article" date="2004" name="Fungal Genet. Biol.">
        <title>The determinant step in ergot alkaloid biosynthesis by an endophyte of perennial ryegrass.</title>
        <authorList>
            <person name="Wang J."/>
            <person name="Machado C."/>
            <person name="Panaccione D.G."/>
            <person name="Tsai H.-F."/>
            <person name="Schardl C.L."/>
        </authorList>
    </citation>
    <scope>NUCLEOTIDE SEQUENCE [GENOMIC DNA]</scope>
</reference>